<evidence type="ECO:0000255" key="1">
    <source>
        <dbReference type="HAMAP-Rule" id="MF_01365"/>
    </source>
</evidence>
<evidence type="ECO:0000305" key="2"/>
<organism>
    <name type="scientific">Bordetella parapertussis (strain 12822 / ATCC BAA-587 / NCTC 13253)</name>
    <dbReference type="NCBI Taxonomy" id="257311"/>
    <lineage>
        <taxon>Bacteria</taxon>
        <taxon>Pseudomonadati</taxon>
        <taxon>Pseudomonadota</taxon>
        <taxon>Betaproteobacteria</taxon>
        <taxon>Burkholderiales</taxon>
        <taxon>Alcaligenaceae</taxon>
        <taxon>Bordetella</taxon>
    </lineage>
</organism>
<reference key="1">
    <citation type="journal article" date="2003" name="Nat. Genet.">
        <title>Comparative analysis of the genome sequences of Bordetella pertussis, Bordetella parapertussis and Bordetella bronchiseptica.</title>
        <authorList>
            <person name="Parkhill J."/>
            <person name="Sebaihia M."/>
            <person name="Preston A."/>
            <person name="Murphy L.D."/>
            <person name="Thomson N.R."/>
            <person name="Harris D.E."/>
            <person name="Holden M.T.G."/>
            <person name="Churcher C.M."/>
            <person name="Bentley S.D."/>
            <person name="Mungall K.L."/>
            <person name="Cerdeno-Tarraga A.-M."/>
            <person name="Temple L."/>
            <person name="James K.D."/>
            <person name="Harris B."/>
            <person name="Quail M.A."/>
            <person name="Achtman M."/>
            <person name="Atkin R."/>
            <person name="Baker S."/>
            <person name="Basham D."/>
            <person name="Bason N."/>
            <person name="Cherevach I."/>
            <person name="Chillingworth T."/>
            <person name="Collins M."/>
            <person name="Cronin A."/>
            <person name="Davis P."/>
            <person name="Doggett J."/>
            <person name="Feltwell T."/>
            <person name="Goble A."/>
            <person name="Hamlin N."/>
            <person name="Hauser H."/>
            <person name="Holroyd S."/>
            <person name="Jagels K."/>
            <person name="Leather S."/>
            <person name="Moule S."/>
            <person name="Norberczak H."/>
            <person name="O'Neil S."/>
            <person name="Ormond D."/>
            <person name="Price C."/>
            <person name="Rabbinowitsch E."/>
            <person name="Rutter S."/>
            <person name="Sanders M."/>
            <person name="Saunders D."/>
            <person name="Seeger K."/>
            <person name="Sharp S."/>
            <person name="Simmonds M."/>
            <person name="Skelton J."/>
            <person name="Squares R."/>
            <person name="Squares S."/>
            <person name="Stevens K."/>
            <person name="Unwin L."/>
            <person name="Whitehead S."/>
            <person name="Barrell B.G."/>
            <person name="Maskell D.J."/>
        </authorList>
    </citation>
    <scope>NUCLEOTIDE SEQUENCE [LARGE SCALE GENOMIC DNA]</scope>
    <source>
        <strain>12822 / ATCC BAA-587 / NCTC 13253</strain>
    </source>
</reference>
<dbReference type="EMBL" id="BX640423">
    <property type="protein sequence ID" value="CAE39787.1"/>
    <property type="molecule type" value="Genomic_DNA"/>
</dbReference>
<dbReference type="RefSeq" id="WP_003806921.1">
    <property type="nucleotide sequence ID" value="NC_002928.3"/>
</dbReference>
<dbReference type="SMR" id="Q7W2E0"/>
<dbReference type="GeneID" id="93206276"/>
<dbReference type="KEGG" id="bpa:BPP0046"/>
<dbReference type="HOGENOM" id="CLU_065464_1_2_4"/>
<dbReference type="Proteomes" id="UP000001421">
    <property type="component" value="Chromosome"/>
</dbReference>
<dbReference type="GO" id="GO:0022625">
    <property type="term" value="C:cytosolic large ribosomal subunit"/>
    <property type="evidence" value="ECO:0007669"/>
    <property type="project" value="TreeGrafter"/>
</dbReference>
<dbReference type="GO" id="GO:0019843">
    <property type="term" value="F:rRNA binding"/>
    <property type="evidence" value="ECO:0007669"/>
    <property type="project" value="UniProtKB-UniRule"/>
</dbReference>
<dbReference type="GO" id="GO:0003735">
    <property type="term" value="F:structural constituent of ribosome"/>
    <property type="evidence" value="ECO:0007669"/>
    <property type="project" value="InterPro"/>
</dbReference>
<dbReference type="GO" id="GO:0002181">
    <property type="term" value="P:cytoplasmic translation"/>
    <property type="evidence" value="ECO:0007669"/>
    <property type="project" value="TreeGrafter"/>
</dbReference>
<dbReference type="FunFam" id="3.90.930.12:FF:000001">
    <property type="entry name" value="50S ribosomal protein L6"/>
    <property type="match status" value="1"/>
</dbReference>
<dbReference type="FunFam" id="3.90.930.12:FF:000002">
    <property type="entry name" value="50S ribosomal protein L6"/>
    <property type="match status" value="1"/>
</dbReference>
<dbReference type="Gene3D" id="3.90.930.12">
    <property type="entry name" value="Ribosomal protein L6, alpha-beta domain"/>
    <property type="match status" value="2"/>
</dbReference>
<dbReference type="HAMAP" id="MF_01365_B">
    <property type="entry name" value="Ribosomal_uL6_B"/>
    <property type="match status" value="1"/>
</dbReference>
<dbReference type="InterPro" id="IPR000702">
    <property type="entry name" value="Ribosomal_uL6-like"/>
</dbReference>
<dbReference type="InterPro" id="IPR036789">
    <property type="entry name" value="Ribosomal_uL6-like_a/b-dom_sf"/>
</dbReference>
<dbReference type="InterPro" id="IPR020040">
    <property type="entry name" value="Ribosomal_uL6_a/b-dom"/>
</dbReference>
<dbReference type="InterPro" id="IPR019906">
    <property type="entry name" value="Ribosomal_uL6_bac-type"/>
</dbReference>
<dbReference type="InterPro" id="IPR002358">
    <property type="entry name" value="Ribosomal_uL6_CS"/>
</dbReference>
<dbReference type="NCBIfam" id="TIGR03654">
    <property type="entry name" value="L6_bact"/>
    <property type="match status" value="1"/>
</dbReference>
<dbReference type="PANTHER" id="PTHR11655">
    <property type="entry name" value="60S/50S RIBOSOMAL PROTEIN L6/L9"/>
    <property type="match status" value="1"/>
</dbReference>
<dbReference type="PANTHER" id="PTHR11655:SF14">
    <property type="entry name" value="LARGE RIBOSOMAL SUBUNIT PROTEIN UL6M"/>
    <property type="match status" value="1"/>
</dbReference>
<dbReference type="Pfam" id="PF00347">
    <property type="entry name" value="Ribosomal_L6"/>
    <property type="match status" value="2"/>
</dbReference>
<dbReference type="PIRSF" id="PIRSF002162">
    <property type="entry name" value="Ribosomal_L6"/>
    <property type="match status" value="1"/>
</dbReference>
<dbReference type="PRINTS" id="PR00059">
    <property type="entry name" value="RIBOSOMALL6"/>
</dbReference>
<dbReference type="SUPFAM" id="SSF56053">
    <property type="entry name" value="Ribosomal protein L6"/>
    <property type="match status" value="2"/>
</dbReference>
<dbReference type="PROSITE" id="PS00525">
    <property type="entry name" value="RIBOSOMAL_L6_1"/>
    <property type="match status" value="1"/>
</dbReference>
<proteinExistence type="inferred from homology"/>
<accession>Q7W2E0</accession>
<gene>
    <name evidence="1" type="primary">rplF</name>
    <name type="ordered locus">BPP0046</name>
</gene>
<name>RL6_BORPA</name>
<feature type="chain" id="PRO_0000265222" description="Large ribosomal subunit protein uL6">
    <location>
        <begin position="1"/>
        <end position="177"/>
    </location>
</feature>
<comment type="function">
    <text evidence="1">This protein binds to the 23S rRNA, and is important in its secondary structure. It is located near the subunit interface in the base of the L7/L12 stalk, and near the tRNA binding site of the peptidyltransferase center.</text>
</comment>
<comment type="subunit">
    <text evidence="1">Part of the 50S ribosomal subunit.</text>
</comment>
<comment type="similarity">
    <text evidence="1">Belongs to the universal ribosomal protein uL6 family.</text>
</comment>
<sequence length="177" mass="19160">MSRIAKYPVELPKGVEASIQPDQITVKGPLGTLVQSLTGDVNVAQEDGKLTFVVANDSRHANAMSGTLRALVANMVTGVSKGFERKLNLVGVGYRAQIQGDAVKLQLGFSHDVVHQLPAGVKAECPTQTEIVIKGPNKQVVGQVAAEIRKYREPEPYKGKGVRYADERVVIKETKKK</sequence>
<keyword id="KW-0687">Ribonucleoprotein</keyword>
<keyword id="KW-0689">Ribosomal protein</keyword>
<keyword id="KW-0694">RNA-binding</keyword>
<keyword id="KW-0699">rRNA-binding</keyword>
<protein>
    <recommendedName>
        <fullName evidence="1">Large ribosomal subunit protein uL6</fullName>
    </recommendedName>
    <alternativeName>
        <fullName evidence="2">50S ribosomal protein L6</fullName>
    </alternativeName>
</protein>